<dbReference type="EMBL" id="AJ010479">
    <property type="protein sequence ID" value="CAA09217.1"/>
    <property type="molecule type" value="mRNA"/>
</dbReference>
<dbReference type="EMBL" id="AL021366">
    <property type="protein sequence ID" value="CAA16157.1"/>
    <property type="molecule type" value="Genomic_DNA"/>
</dbReference>
<dbReference type="EMBL" id="AL050332">
    <property type="protein sequence ID" value="CAB63782.1"/>
    <property type="molecule type" value="Genomic_DNA"/>
</dbReference>
<dbReference type="EMBL" id="AL662799">
    <property type="status" value="NOT_ANNOTATED_CDS"/>
    <property type="molecule type" value="Genomic_DNA"/>
</dbReference>
<dbReference type="EMBL" id="BX088650">
    <property type="status" value="NOT_ANNOTATED_CDS"/>
    <property type="molecule type" value="Genomic_DNA"/>
</dbReference>
<dbReference type="EMBL" id="BX248088">
    <property type="status" value="NOT_ANNOTATED_CDS"/>
    <property type="molecule type" value="Genomic_DNA"/>
</dbReference>
<dbReference type="EMBL" id="BC000712">
    <property type="protein sequence ID" value="AAH00712.2"/>
    <property type="status" value="ALT_INIT"/>
    <property type="molecule type" value="mRNA"/>
</dbReference>
<dbReference type="EMBL" id="BC063567">
    <property type="protein sequence ID" value="AAH63567.1"/>
    <property type="status" value="ALT_INIT"/>
    <property type="molecule type" value="mRNA"/>
</dbReference>
<dbReference type="EMBL" id="BC073878">
    <property type="protein sequence ID" value="AAH73878.1"/>
    <property type="status" value="ALT_INIT"/>
    <property type="molecule type" value="mRNA"/>
</dbReference>
<dbReference type="EMBL" id="BC098438">
    <property type="protein sequence ID" value="AAH98438.1"/>
    <property type="status" value="ALT_INIT"/>
    <property type="molecule type" value="mRNA"/>
</dbReference>
<dbReference type="EMBL" id="BC121041">
    <property type="protein sequence ID" value="AAI21042.1"/>
    <property type="molecule type" value="mRNA"/>
</dbReference>
<dbReference type="EMBL" id="BC121042">
    <property type="protein sequence ID" value="AAI21043.1"/>
    <property type="molecule type" value="mRNA"/>
</dbReference>
<dbReference type="EMBL" id="D14678">
    <property type="protein sequence ID" value="BAA03509.1"/>
    <property type="status" value="ALT_FRAME"/>
    <property type="molecule type" value="mRNA"/>
</dbReference>
<dbReference type="CCDS" id="CCDS34430.1"/>
<dbReference type="PIR" id="I54523">
    <property type="entry name" value="I54523"/>
</dbReference>
<dbReference type="RefSeq" id="NP_002254.2">
    <property type="nucleotide sequence ID" value="NM_002263.4"/>
</dbReference>
<dbReference type="PDB" id="5WDH">
    <property type="method" value="X-ray"/>
    <property type="resolution" value="2.25 A"/>
    <property type="chains" value="A=307-663"/>
</dbReference>
<dbReference type="PDBsum" id="5WDH"/>
<dbReference type="SMR" id="Q9BW19"/>
<dbReference type="BioGRID" id="110031">
    <property type="interactions" value="104"/>
</dbReference>
<dbReference type="FunCoup" id="Q9BW19">
    <property type="interactions" value="921"/>
</dbReference>
<dbReference type="IntAct" id="Q9BW19">
    <property type="interactions" value="56"/>
</dbReference>
<dbReference type="MINT" id="Q9BW19"/>
<dbReference type="STRING" id="9606.ENSP00000393963"/>
<dbReference type="BindingDB" id="Q9BW19"/>
<dbReference type="ChEMBL" id="CHEMBL3351200"/>
<dbReference type="GlyGen" id="Q9BW19">
    <property type="glycosylation" value="2 sites, 1 O-linked glycan (1 site)"/>
</dbReference>
<dbReference type="iPTMnet" id="Q9BW19"/>
<dbReference type="PhosphoSitePlus" id="Q9BW19"/>
<dbReference type="SwissPalm" id="Q9BW19"/>
<dbReference type="BioMuta" id="KIFC1"/>
<dbReference type="DMDM" id="20138710"/>
<dbReference type="jPOST" id="Q9BW19"/>
<dbReference type="MassIVE" id="Q9BW19"/>
<dbReference type="PaxDb" id="9606-ENSP00000393963"/>
<dbReference type="PeptideAtlas" id="Q9BW19"/>
<dbReference type="ProteomicsDB" id="79250"/>
<dbReference type="Pumba" id="Q9BW19"/>
<dbReference type="Antibodypedia" id="29133">
    <property type="antibodies" value="157 antibodies from 31 providers"/>
</dbReference>
<dbReference type="DNASU" id="3833"/>
<dbReference type="Ensembl" id="ENST00000374523.8">
    <property type="protein sequence ID" value="ENSP00000363647.4"/>
    <property type="gene ID" value="ENSG00000204197.9"/>
</dbReference>
<dbReference type="Ensembl" id="ENST00000428849.7">
    <property type="protein sequence ID" value="ENSP00000393963.2"/>
    <property type="gene ID" value="ENSG00000237649.8"/>
</dbReference>
<dbReference type="Ensembl" id="ENST00000448818.6">
    <property type="protein sequence ID" value="ENSP00000407885.2"/>
    <property type="gene ID" value="ENSG00000233450.7"/>
</dbReference>
<dbReference type="GeneID" id="3833"/>
<dbReference type="KEGG" id="hsa:3833"/>
<dbReference type="MANE-Select" id="ENST00000428849.7">
    <property type="protein sequence ID" value="ENSP00000393963.2"/>
    <property type="RefSeq nucleotide sequence ID" value="NM_002263.4"/>
    <property type="RefSeq protein sequence ID" value="NP_002254.2"/>
</dbReference>
<dbReference type="UCSC" id="uc003oef.5">
    <property type="organism name" value="human"/>
</dbReference>
<dbReference type="AGR" id="HGNC:6389"/>
<dbReference type="CTD" id="3833"/>
<dbReference type="DisGeNET" id="3833"/>
<dbReference type="GeneCards" id="KIFC1"/>
<dbReference type="HGNC" id="HGNC:6389">
    <property type="gene designation" value="KIFC1"/>
</dbReference>
<dbReference type="HPA" id="ENSG00000237649">
    <property type="expression patterns" value="Tissue enhanced (bone marrow, lymphoid tissue)"/>
</dbReference>
<dbReference type="MIM" id="603763">
    <property type="type" value="gene"/>
</dbReference>
<dbReference type="neXtProt" id="NX_Q9BW19"/>
<dbReference type="OpenTargets" id="ENSG00000237649"/>
<dbReference type="PharmGKB" id="PA30178"/>
<dbReference type="VEuPathDB" id="HostDB:ENSG00000237649"/>
<dbReference type="eggNOG" id="KOG0239">
    <property type="taxonomic scope" value="Eukaryota"/>
</dbReference>
<dbReference type="GeneTree" id="ENSGT00940000161735"/>
<dbReference type="HOGENOM" id="CLU_001485_12_4_1"/>
<dbReference type="InParanoid" id="Q9BW19"/>
<dbReference type="OMA" id="WTYHDEA"/>
<dbReference type="OrthoDB" id="3176171at2759"/>
<dbReference type="PAN-GO" id="Q9BW19">
    <property type="GO annotations" value="10 GO annotations based on evolutionary models"/>
</dbReference>
<dbReference type="PhylomeDB" id="Q9BW19"/>
<dbReference type="TreeFam" id="TF105237"/>
<dbReference type="PathwayCommons" id="Q9BW19"/>
<dbReference type="Reactome" id="R-HSA-6811434">
    <property type="pathway name" value="COPI-dependent Golgi-to-ER retrograde traffic"/>
</dbReference>
<dbReference type="Reactome" id="R-HSA-983189">
    <property type="pathway name" value="Kinesins"/>
</dbReference>
<dbReference type="SignaLink" id="Q9BW19"/>
<dbReference type="SIGNOR" id="Q9BW19"/>
<dbReference type="BioGRID-ORCS" id="3833">
    <property type="hits" value="41 hits in 1153 CRISPR screens"/>
</dbReference>
<dbReference type="CD-CODE" id="8C2F96ED">
    <property type="entry name" value="Centrosome"/>
</dbReference>
<dbReference type="ChiTaRS" id="KIFC1">
    <property type="organism name" value="human"/>
</dbReference>
<dbReference type="GeneWiki" id="KIFC1"/>
<dbReference type="GenomeRNAi" id="3833"/>
<dbReference type="Pharos" id="Q9BW19">
    <property type="development level" value="Tchem"/>
</dbReference>
<dbReference type="PRO" id="PR:Q9BW19"/>
<dbReference type="Proteomes" id="UP000005640">
    <property type="component" value="Chromosome 6"/>
</dbReference>
<dbReference type="RNAct" id="Q9BW19">
    <property type="molecule type" value="protein"/>
</dbReference>
<dbReference type="Bgee" id="ENSG00000237649">
    <property type="expression patterns" value="Expressed in ventricular zone and 103 other cell types or tissues"/>
</dbReference>
<dbReference type="ExpressionAtlas" id="Q9BW19">
    <property type="expression patterns" value="baseline and differential"/>
</dbReference>
<dbReference type="GO" id="GO:0005813">
    <property type="term" value="C:centrosome"/>
    <property type="evidence" value="ECO:0007669"/>
    <property type="project" value="UniProtKB-SubCell"/>
</dbReference>
<dbReference type="GO" id="GO:0005737">
    <property type="term" value="C:cytoplasm"/>
    <property type="evidence" value="ECO:0000318"/>
    <property type="project" value="GO_Central"/>
</dbReference>
<dbReference type="GO" id="GO:0005769">
    <property type="term" value="C:early endosome"/>
    <property type="evidence" value="ECO:0007669"/>
    <property type="project" value="UniProtKB-SubCell"/>
</dbReference>
<dbReference type="GO" id="GO:0005871">
    <property type="term" value="C:kinesin complex"/>
    <property type="evidence" value="ECO:0000318"/>
    <property type="project" value="GO_Central"/>
</dbReference>
<dbReference type="GO" id="GO:0016020">
    <property type="term" value="C:membrane"/>
    <property type="evidence" value="ECO:0007005"/>
    <property type="project" value="UniProtKB"/>
</dbReference>
<dbReference type="GO" id="GO:0005874">
    <property type="term" value="C:microtubule"/>
    <property type="evidence" value="ECO:0000318"/>
    <property type="project" value="GO_Central"/>
</dbReference>
<dbReference type="GO" id="GO:0005815">
    <property type="term" value="C:microtubule organizing center"/>
    <property type="evidence" value="ECO:0000318"/>
    <property type="project" value="GO_Central"/>
</dbReference>
<dbReference type="GO" id="GO:0072686">
    <property type="term" value="C:mitotic spindle"/>
    <property type="evidence" value="ECO:0000318"/>
    <property type="project" value="GO_Central"/>
</dbReference>
<dbReference type="GO" id="GO:0005634">
    <property type="term" value="C:nucleus"/>
    <property type="evidence" value="ECO:0000318"/>
    <property type="project" value="GO_Central"/>
</dbReference>
<dbReference type="GO" id="GO:0005524">
    <property type="term" value="F:ATP binding"/>
    <property type="evidence" value="ECO:0000303"/>
    <property type="project" value="UniProtKB"/>
</dbReference>
<dbReference type="GO" id="GO:0016887">
    <property type="term" value="F:ATP hydrolysis activity"/>
    <property type="evidence" value="ECO:0000318"/>
    <property type="project" value="GO_Central"/>
</dbReference>
<dbReference type="GO" id="GO:0008017">
    <property type="term" value="F:microtubule binding"/>
    <property type="evidence" value="ECO:0000318"/>
    <property type="project" value="GO_Central"/>
</dbReference>
<dbReference type="GO" id="GO:0003777">
    <property type="term" value="F:microtubule motor activity"/>
    <property type="evidence" value="ECO:0000318"/>
    <property type="project" value="GO_Central"/>
</dbReference>
<dbReference type="GO" id="GO:0051301">
    <property type="term" value="P:cell division"/>
    <property type="evidence" value="ECO:0007669"/>
    <property type="project" value="UniProtKB-KW"/>
</dbReference>
<dbReference type="GO" id="GO:0007018">
    <property type="term" value="P:microtubule-based movement"/>
    <property type="evidence" value="ECO:0000318"/>
    <property type="project" value="GO_Central"/>
</dbReference>
<dbReference type="GO" id="GO:0007080">
    <property type="term" value="P:mitotic metaphase chromosome alignment"/>
    <property type="evidence" value="ECO:0000315"/>
    <property type="project" value="UniProtKB"/>
</dbReference>
<dbReference type="GO" id="GO:0000070">
    <property type="term" value="P:mitotic sister chromatid segregation"/>
    <property type="evidence" value="ECO:0000303"/>
    <property type="project" value="UniProtKB"/>
</dbReference>
<dbReference type="GO" id="GO:0090307">
    <property type="term" value="P:mitotic spindle assembly"/>
    <property type="evidence" value="ECO:0000315"/>
    <property type="project" value="UniProtKB"/>
</dbReference>
<dbReference type="GO" id="GO:0007283">
    <property type="term" value="P:spermatogenesis"/>
    <property type="evidence" value="ECO:0007669"/>
    <property type="project" value="Ensembl"/>
</dbReference>
<dbReference type="CDD" id="cd01366">
    <property type="entry name" value="KISc_C_terminal"/>
    <property type="match status" value="1"/>
</dbReference>
<dbReference type="FunFam" id="1.10.287.1490:FF:000008">
    <property type="entry name" value="Kinesin-like protein"/>
    <property type="match status" value="1"/>
</dbReference>
<dbReference type="FunFam" id="3.40.850.10:FF:000046">
    <property type="entry name" value="Kinesin-like protein"/>
    <property type="match status" value="1"/>
</dbReference>
<dbReference type="Gene3D" id="1.10.287.1490">
    <property type="match status" value="1"/>
</dbReference>
<dbReference type="Gene3D" id="3.40.850.10">
    <property type="entry name" value="Kinesin motor domain"/>
    <property type="match status" value="1"/>
</dbReference>
<dbReference type="InterPro" id="IPR027640">
    <property type="entry name" value="Kinesin-like_fam"/>
</dbReference>
<dbReference type="InterPro" id="IPR019821">
    <property type="entry name" value="Kinesin_motor_CS"/>
</dbReference>
<dbReference type="InterPro" id="IPR001752">
    <property type="entry name" value="Kinesin_motor_dom"/>
</dbReference>
<dbReference type="InterPro" id="IPR036961">
    <property type="entry name" value="Kinesin_motor_dom_sf"/>
</dbReference>
<dbReference type="InterPro" id="IPR027417">
    <property type="entry name" value="P-loop_NTPase"/>
</dbReference>
<dbReference type="PANTHER" id="PTHR47972">
    <property type="entry name" value="KINESIN-LIKE PROTEIN KLP-3"/>
    <property type="match status" value="1"/>
</dbReference>
<dbReference type="PANTHER" id="PTHR47972:SF45">
    <property type="entry name" value="PROTEIN CLARET SEGREGATIONAL"/>
    <property type="match status" value="1"/>
</dbReference>
<dbReference type="Pfam" id="PF00225">
    <property type="entry name" value="Kinesin"/>
    <property type="match status" value="1"/>
</dbReference>
<dbReference type="PRINTS" id="PR00380">
    <property type="entry name" value="KINESINHEAVY"/>
</dbReference>
<dbReference type="SMART" id="SM00129">
    <property type="entry name" value="KISc"/>
    <property type="match status" value="1"/>
</dbReference>
<dbReference type="SUPFAM" id="SSF52540">
    <property type="entry name" value="P-loop containing nucleoside triphosphate hydrolases"/>
    <property type="match status" value="1"/>
</dbReference>
<dbReference type="PROSITE" id="PS00411">
    <property type="entry name" value="KINESIN_MOTOR_1"/>
    <property type="match status" value="1"/>
</dbReference>
<dbReference type="PROSITE" id="PS50067">
    <property type="entry name" value="KINESIN_MOTOR_2"/>
    <property type="match status" value="1"/>
</dbReference>
<feature type="chain" id="PRO_0000125428" description="Kinesin-like protein KIFC1">
    <location>
        <begin position="1"/>
        <end position="673"/>
    </location>
</feature>
<feature type="domain" description="Kinesin motor" evidence="4">
    <location>
        <begin position="310"/>
        <end position="663"/>
    </location>
</feature>
<feature type="region of interest" description="Disordered" evidence="5">
    <location>
        <begin position="23"/>
        <end position="94"/>
    </location>
</feature>
<feature type="region of interest" description="Disordered" evidence="5">
    <location>
        <begin position="109"/>
        <end position="136"/>
    </location>
</feature>
<feature type="region of interest" description="Disordered" evidence="5">
    <location>
        <begin position="325"/>
        <end position="372"/>
    </location>
</feature>
<feature type="coiled-coil region" evidence="3">
    <location>
        <begin position="142"/>
        <end position="306"/>
    </location>
</feature>
<feature type="compositionally biased region" description="Polar residues" evidence="5">
    <location>
        <begin position="60"/>
        <end position="86"/>
    </location>
</feature>
<feature type="binding site" evidence="4">
    <location>
        <begin position="410"/>
        <end position="417"/>
    </location>
    <ligand>
        <name>ATP</name>
        <dbReference type="ChEBI" id="CHEBI:30616"/>
    </ligand>
</feature>
<feature type="modified residue" description="Phosphoserine" evidence="10">
    <location>
        <position position="6"/>
    </location>
</feature>
<feature type="modified residue" description="Phosphoserine" evidence="10">
    <location>
        <position position="26"/>
    </location>
</feature>
<feature type="modified residue" description="Phosphoserine" evidence="9">
    <location>
        <position position="31"/>
    </location>
</feature>
<feature type="modified residue" description="Phosphoserine" evidence="10">
    <location>
        <position position="33"/>
    </location>
</feature>
<feature type="modified residue" description="Phosphothreonine" evidence="10">
    <location>
        <position position="359"/>
    </location>
</feature>
<feature type="sequence variant" id="VAR_012650" description="In dbSNP:rs61736175." evidence="6">
    <original>R</original>
    <variation>Q</variation>
    <location>
        <position position="219"/>
    </location>
</feature>
<feature type="sequence conflict" description="In Ref. 3; AAH00712." evidence="8" ref="3">
    <original>T</original>
    <variation>P</variation>
    <location>
        <position position="368"/>
    </location>
</feature>
<feature type="strand" evidence="11">
    <location>
        <begin position="311"/>
        <end position="317"/>
    </location>
</feature>
<feature type="strand" evidence="11">
    <location>
        <begin position="331"/>
        <end position="333"/>
    </location>
</feature>
<feature type="strand" evidence="11">
    <location>
        <begin position="347"/>
        <end position="350"/>
    </location>
</feature>
<feature type="strand" evidence="11">
    <location>
        <begin position="371"/>
        <end position="373"/>
    </location>
</feature>
<feature type="strand" evidence="11">
    <location>
        <begin position="375"/>
        <end position="378"/>
    </location>
</feature>
<feature type="helix" evidence="11">
    <location>
        <begin position="384"/>
        <end position="389"/>
    </location>
</feature>
<feature type="helix" evidence="11">
    <location>
        <begin position="392"/>
        <end position="396"/>
    </location>
</feature>
<feature type="helix" evidence="11">
    <location>
        <begin position="397"/>
        <end position="400"/>
    </location>
</feature>
<feature type="strand" evidence="11">
    <location>
        <begin position="404"/>
        <end position="411"/>
    </location>
</feature>
<feature type="helix" evidence="11">
    <location>
        <begin position="416"/>
        <end position="420"/>
    </location>
</feature>
<feature type="helix" evidence="11">
    <location>
        <begin position="428"/>
        <end position="430"/>
    </location>
</feature>
<feature type="helix" evidence="11">
    <location>
        <begin position="433"/>
        <end position="449"/>
    </location>
</feature>
<feature type="turn" evidence="11">
    <location>
        <begin position="450"/>
        <end position="452"/>
    </location>
</feature>
<feature type="strand" evidence="11">
    <location>
        <begin position="453"/>
        <end position="465"/>
    </location>
</feature>
<feature type="strand" evidence="11">
    <location>
        <begin position="468"/>
        <end position="471"/>
    </location>
</feature>
<feature type="strand" evidence="11">
    <location>
        <begin position="487"/>
        <end position="489"/>
    </location>
</feature>
<feature type="strand" evidence="11">
    <location>
        <begin position="497"/>
        <end position="499"/>
    </location>
</feature>
<feature type="helix" evidence="11">
    <location>
        <begin position="510"/>
        <end position="526"/>
    </location>
</feature>
<feature type="helix" evidence="11">
    <location>
        <begin position="535"/>
        <end position="537"/>
    </location>
</feature>
<feature type="strand" evidence="11">
    <location>
        <begin position="538"/>
        <end position="554"/>
    </location>
</feature>
<feature type="strand" evidence="11">
    <location>
        <begin position="556"/>
        <end position="565"/>
    </location>
</feature>
<feature type="helix" evidence="11">
    <location>
        <begin position="596"/>
        <end position="607"/>
    </location>
</feature>
<feature type="helix" evidence="11">
    <location>
        <begin position="615"/>
        <end position="617"/>
    </location>
</feature>
<feature type="helix" evidence="11">
    <location>
        <begin position="619"/>
        <end position="624"/>
    </location>
</feature>
<feature type="helix" evidence="11">
    <location>
        <begin position="625"/>
        <end position="627"/>
    </location>
</feature>
<feature type="strand" evidence="11">
    <location>
        <begin position="633"/>
        <end position="640"/>
    </location>
</feature>
<feature type="helix" evidence="11">
    <location>
        <begin position="644"/>
        <end position="646"/>
    </location>
</feature>
<feature type="helix" evidence="11">
    <location>
        <begin position="647"/>
        <end position="662"/>
    </location>
</feature>
<protein>
    <recommendedName>
        <fullName>Kinesin-like protein KIFC1</fullName>
    </recommendedName>
    <alternativeName>
        <fullName>Kinesin-like protein 2</fullName>
    </alternativeName>
    <alternativeName>
        <fullName>Kinesin-related protein HSET</fullName>
    </alternativeName>
</protein>
<comment type="function">
    <text evidence="2 7">Minus end-directed microtubule-dependent motor required for bipolar spindle formation (PubMed:15843429). May contribute to movement of early endocytic vesicles (By similarity). Regulates cilium formation and structure (By similarity).</text>
</comment>
<comment type="subunit">
    <text evidence="1">Binds NUBP1 and NUBP2. Interacts with PPP1R42 (By similarity).</text>
</comment>
<comment type="subcellular location">
    <subcellularLocation>
        <location evidence="2">Nucleus</location>
    </subcellularLocation>
    <subcellularLocation>
        <location evidence="2">Cytoplasm</location>
        <location evidence="2">Cytoskeleton</location>
        <location evidence="2">Microtubule organizing center</location>
        <location evidence="2">Centrosome</location>
    </subcellularLocation>
    <subcellularLocation>
        <location evidence="2">Cytoplasm</location>
        <location evidence="2">Cytoskeleton</location>
        <location evidence="2">Spindle</location>
    </subcellularLocation>
    <subcellularLocation>
        <location evidence="2">Early endosome</location>
    </subcellularLocation>
    <text evidence="2">Associated with nucleus during interphase, centrosomes in early and spindle in later mitosis.</text>
</comment>
<comment type="miscellaneous">
    <text>HeLa cells lacking KIFC1 show multipolar mitotic spindles and a defect in chromosome congression and chromosome alignment during mitosis.</text>
</comment>
<comment type="similarity">
    <text evidence="4">Belongs to the TRAFAC class myosin-kinesin ATPase superfamily. Kinesin family. NCD subfamily.</text>
</comment>
<comment type="sequence caution" evidence="8">
    <conflict type="erroneous initiation">
        <sequence resource="EMBL-CDS" id="AAH00712"/>
    </conflict>
</comment>
<comment type="sequence caution" evidence="8">
    <conflict type="erroneous initiation">
        <sequence resource="EMBL-CDS" id="AAH63567"/>
    </conflict>
</comment>
<comment type="sequence caution" evidence="8">
    <conflict type="erroneous initiation">
        <sequence resource="EMBL-CDS" id="AAH73878"/>
    </conflict>
</comment>
<comment type="sequence caution" evidence="8">
    <conflict type="erroneous initiation">
        <sequence resource="EMBL-CDS" id="AAH98438"/>
    </conflict>
</comment>
<comment type="sequence caution" evidence="8">
    <conflict type="frameshift">
        <sequence resource="EMBL-CDS" id="BAA03509"/>
    </conflict>
</comment>
<name>KIFC1_HUMAN</name>
<reference key="1">
    <citation type="journal article" date="1999" name="Immunogenetics">
        <title>Genomic organization of the HSET locus and the possible association of HLA-linked genes with immotile cilia syndrome (ICS).</title>
        <authorList>
            <person name="Janitz K."/>
            <person name="Wild A."/>
            <person name="Beck S."/>
            <person name="Savasta S."/>
            <person name="Beluffi G."/>
            <person name="Ziegler A."/>
            <person name="Volz A."/>
        </authorList>
    </citation>
    <scope>NUCLEOTIDE SEQUENCE [MRNA]</scope>
    <scope>VARIANT GLN-219</scope>
</reference>
<reference key="2">
    <citation type="journal article" date="2003" name="Nature">
        <title>The DNA sequence and analysis of human chromosome 6.</title>
        <authorList>
            <person name="Mungall A.J."/>
            <person name="Palmer S.A."/>
            <person name="Sims S.K."/>
            <person name="Edwards C.A."/>
            <person name="Ashurst J.L."/>
            <person name="Wilming L."/>
            <person name="Jones M.C."/>
            <person name="Horton R."/>
            <person name="Hunt S.E."/>
            <person name="Scott C.E."/>
            <person name="Gilbert J.G.R."/>
            <person name="Clamp M.E."/>
            <person name="Bethel G."/>
            <person name="Milne S."/>
            <person name="Ainscough R."/>
            <person name="Almeida J.P."/>
            <person name="Ambrose K.D."/>
            <person name="Andrews T.D."/>
            <person name="Ashwell R.I.S."/>
            <person name="Babbage A.K."/>
            <person name="Bagguley C.L."/>
            <person name="Bailey J."/>
            <person name="Banerjee R."/>
            <person name="Barker D.J."/>
            <person name="Barlow K.F."/>
            <person name="Bates K."/>
            <person name="Beare D.M."/>
            <person name="Beasley H."/>
            <person name="Beasley O."/>
            <person name="Bird C.P."/>
            <person name="Blakey S.E."/>
            <person name="Bray-Allen S."/>
            <person name="Brook J."/>
            <person name="Brown A.J."/>
            <person name="Brown J.Y."/>
            <person name="Burford D.C."/>
            <person name="Burrill W."/>
            <person name="Burton J."/>
            <person name="Carder C."/>
            <person name="Carter N.P."/>
            <person name="Chapman J.C."/>
            <person name="Clark S.Y."/>
            <person name="Clark G."/>
            <person name="Clee C.M."/>
            <person name="Clegg S."/>
            <person name="Cobley V."/>
            <person name="Collier R.E."/>
            <person name="Collins J.E."/>
            <person name="Colman L.K."/>
            <person name="Corby N.R."/>
            <person name="Coville G.J."/>
            <person name="Culley K.M."/>
            <person name="Dhami P."/>
            <person name="Davies J."/>
            <person name="Dunn M."/>
            <person name="Earthrowl M.E."/>
            <person name="Ellington A.E."/>
            <person name="Evans K.A."/>
            <person name="Faulkner L."/>
            <person name="Francis M.D."/>
            <person name="Frankish A."/>
            <person name="Frankland J."/>
            <person name="French L."/>
            <person name="Garner P."/>
            <person name="Garnett J."/>
            <person name="Ghori M.J."/>
            <person name="Gilby L.M."/>
            <person name="Gillson C.J."/>
            <person name="Glithero R.J."/>
            <person name="Grafham D.V."/>
            <person name="Grant M."/>
            <person name="Gribble S."/>
            <person name="Griffiths C."/>
            <person name="Griffiths M.N.D."/>
            <person name="Hall R."/>
            <person name="Halls K.S."/>
            <person name="Hammond S."/>
            <person name="Harley J.L."/>
            <person name="Hart E.A."/>
            <person name="Heath P.D."/>
            <person name="Heathcott R."/>
            <person name="Holmes S.J."/>
            <person name="Howden P.J."/>
            <person name="Howe K.L."/>
            <person name="Howell G.R."/>
            <person name="Huckle E."/>
            <person name="Humphray S.J."/>
            <person name="Humphries M.D."/>
            <person name="Hunt A.R."/>
            <person name="Johnson C.M."/>
            <person name="Joy A.A."/>
            <person name="Kay M."/>
            <person name="Keenan S.J."/>
            <person name="Kimberley A.M."/>
            <person name="King A."/>
            <person name="Laird G.K."/>
            <person name="Langford C."/>
            <person name="Lawlor S."/>
            <person name="Leongamornlert D.A."/>
            <person name="Leversha M."/>
            <person name="Lloyd C.R."/>
            <person name="Lloyd D.M."/>
            <person name="Loveland J.E."/>
            <person name="Lovell J."/>
            <person name="Martin S."/>
            <person name="Mashreghi-Mohammadi M."/>
            <person name="Maslen G.L."/>
            <person name="Matthews L."/>
            <person name="McCann O.T."/>
            <person name="McLaren S.J."/>
            <person name="McLay K."/>
            <person name="McMurray A."/>
            <person name="Moore M.J.F."/>
            <person name="Mullikin J.C."/>
            <person name="Niblett D."/>
            <person name="Nickerson T."/>
            <person name="Novik K.L."/>
            <person name="Oliver K."/>
            <person name="Overton-Larty E.K."/>
            <person name="Parker A."/>
            <person name="Patel R."/>
            <person name="Pearce A.V."/>
            <person name="Peck A.I."/>
            <person name="Phillimore B.J.C.T."/>
            <person name="Phillips S."/>
            <person name="Plumb R.W."/>
            <person name="Porter K.M."/>
            <person name="Ramsey Y."/>
            <person name="Ranby S.A."/>
            <person name="Rice C.M."/>
            <person name="Ross M.T."/>
            <person name="Searle S.M."/>
            <person name="Sehra H.K."/>
            <person name="Sheridan E."/>
            <person name="Skuce C.D."/>
            <person name="Smith S."/>
            <person name="Smith M."/>
            <person name="Spraggon L."/>
            <person name="Squares S.L."/>
            <person name="Steward C.A."/>
            <person name="Sycamore N."/>
            <person name="Tamlyn-Hall G."/>
            <person name="Tester J."/>
            <person name="Theaker A.J."/>
            <person name="Thomas D.W."/>
            <person name="Thorpe A."/>
            <person name="Tracey A."/>
            <person name="Tromans A."/>
            <person name="Tubby B."/>
            <person name="Wall M."/>
            <person name="Wallis J.M."/>
            <person name="West A.P."/>
            <person name="White S.S."/>
            <person name="Whitehead S.L."/>
            <person name="Whittaker H."/>
            <person name="Wild A."/>
            <person name="Willey D.J."/>
            <person name="Wilmer T.E."/>
            <person name="Wood J.M."/>
            <person name="Wray P.W."/>
            <person name="Wyatt J.C."/>
            <person name="Young L."/>
            <person name="Younger R.M."/>
            <person name="Bentley D.R."/>
            <person name="Coulson A."/>
            <person name="Durbin R.M."/>
            <person name="Hubbard T."/>
            <person name="Sulston J.E."/>
            <person name="Dunham I."/>
            <person name="Rogers J."/>
            <person name="Beck S."/>
        </authorList>
    </citation>
    <scope>NUCLEOTIDE SEQUENCE [LARGE SCALE GENOMIC DNA]</scope>
</reference>
<reference key="3">
    <citation type="journal article" date="2004" name="Genome Res.">
        <title>The status, quality, and expansion of the NIH full-length cDNA project: the Mammalian Gene Collection (MGC).</title>
        <authorList>
            <consortium name="The MGC Project Team"/>
        </authorList>
    </citation>
    <scope>NUCLEOTIDE SEQUENCE [LARGE SCALE MRNA]</scope>
    <source>
        <tissue>Brain</tissue>
        <tissue>Kidney</tissue>
        <tissue>Muscle</tissue>
        <tissue>Uterus</tissue>
    </source>
</reference>
<reference key="4">
    <citation type="journal article" date="1994" name="Immunogenetics">
        <title>Cloning of a new kinesin-related gene located at the centromeric end of the human MHC region.</title>
        <authorList>
            <person name="Ando A."/>
            <person name="Yara-Kikuti Y."/>
            <person name="Kawata H."/>
            <person name="Okamoto N."/>
            <person name="Imai T."/>
            <person name="Eki T."/>
            <person name="Yokoyama K."/>
            <person name="Soeda E."/>
            <person name="Ikemura T."/>
            <person name="Abe K."/>
            <person name="Inoko H."/>
        </authorList>
    </citation>
    <scope>NUCLEOTIDE SEQUENCE [MRNA] OF 155-673</scope>
    <source>
        <tissue>Testis</tissue>
    </source>
</reference>
<reference key="5">
    <citation type="journal article" date="2005" name="Mol. Biol. Cell">
        <title>Functional analysis of human microtubule-based motor proteins, the kinesins and dyneins, in mitosis/cytokinesis using RNA interference.</title>
        <authorList>
            <person name="Zhu C."/>
            <person name="Zhao J."/>
            <person name="Bibikova M."/>
            <person name="Leverson J.D."/>
            <person name="Bossy-Wetzel E."/>
            <person name="Fan J.-B."/>
            <person name="Abraham R.T."/>
            <person name="Jiang W."/>
        </authorList>
    </citation>
    <scope>FUNCTION</scope>
</reference>
<reference key="6">
    <citation type="journal article" date="2008" name="Proc. Natl. Acad. Sci. U.S.A.">
        <title>A quantitative atlas of mitotic phosphorylation.</title>
        <authorList>
            <person name="Dephoure N."/>
            <person name="Zhou C."/>
            <person name="Villen J."/>
            <person name="Beausoleil S.A."/>
            <person name="Bakalarski C.E."/>
            <person name="Elledge S.J."/>
            <person name="Gygi S.P."/>
        </authorList>
    </citation>
    <scope>IDENTIFICATION BY MASS SPECTROMETRY [LARGE SCALE ANALYSIS]</scope>
    <source>
        <tissue>Cervix carcinoma</tissue>
    </source>
</reference>
<reference key="7">
    <citation type="journal article" date="2010" name="Sci. Signal.">
        <title>Quantitative phosphoproteomics reveals widespread full phosphorylation site occupancy during mitosis.</title>
        <authorList>
            <person name="Olsen J.V."/>
            <person name="Vermeulen M."/>
            <person name="Santamaria A."/>
            <person name="Kumar C."/>
            <person name="Miller M.L."/>
            <person name="Jensen L.J."/>
            <person name="Gnad F."/>
            <person name="Cox J."/>
            <person name="Jensen T.S."/>
            <person name="Nigg E.A."/>
            <person name="Brunak S."/>
            <person name="Mann M."/>
        </authorList>
    </citation>
    <scope>PHOSPHORYLATION [LARGE SCALE ANALYSIS] AT SER-31</scope>
    <scope>IDENTIFICATION BY MASS SPECTROMETRY [LARGE SCALE ANALYSIS]</scope>
    <source>
        <tissue>Cervix carcinoma</tissue>
    </source>
</reference>
<reference key="8">
    <citation type="journal article" date="2011" name="BMC Syst. Biol.">
        <title>Initial characterization of the human central proteome.</title>
        <authorList>
            <person name="Burkard T.R."/>
            <person name="Planyavsky M."/>
            <person name="Kaupe I."/>
            <person name="Breitwieser F.P."/>
            <person name="Buerckstuemmer T."/>
            <person name="Bennett K.L."/>
            <person name="Superti-Furga G."/>
            <person name="Colinge J."/>
        </authorList>
    </citation>
    <scope>IDENTIFICATION BY MASS SPECTROMETRY [LARGE SCALE ANALYSIS]</scope>
</reference>
<reference key="9">
    <citation type="journal article" date="2013" name="J. Proteome Res.">
        <title>Toward a comprehensive characterization of a human cancer cell phosphoproteome.</title>
        <authorList>
            <person name="Zhou H."/>
            <person name="Di Palma S."/>
            <person name="Preisinger C."/>
            <person name="Peng M."/>
            <person name="Polat A.N."/>
            <person name="Heck A.J."/>
            <person name="Mohammed S."/>
        </authorList>
    </citation>
    <scope>PHOSPHORYLATION [LARGE SCALE ANALYSIS] AT SER-6; SER-26; SER-33 AND THR-359</scope>
    <scope>IDENTIFICATION BY MASS SPECTROMETRY [LARGE SCALE ANALYSIS]</scope>
    <source>
        <tissue>Cervix carcinoma</tissue>
        <tissue>Erythroleukemia</tissue>
    </source>
</reference>
<proteinExistence type="evidence at protein level"/>
<sequence length="673" mass="73748">MDPQRSPLLEVKGNIELKRPLIKAPSQLPLSGSRLKRRPDQMEDGLEPEKKRTRGLGATTKITTSHPRVPSLTTVPQTQGQTTAQKVSKKTGPRCSTAIATGLKNQKPVPAVPVQKSGTSGVPPMAGGKKPSKRPAWDLKGQLCDLNAELKRCRERTQTLDQENQQLQDQLRDAQQQVKALGTERTTLEGHLAKVQAQAEQGQQELKNLRACVLELEERLSTQEGLVQELQKKQVELQEERRGLMSQLEEKERRLQTSEAALSSSQAEVASLRQETVAQAALLTEREERLHGLEMERRRLHNQLQELKGNIRVFCRVRPVLPGEPTPPPGLLLFPSGPGGPSDPPTRLSLSRSDERRGTLSGAPAPPTRHDFSFDRVFPPGSGQDEVFEEIAMLVQSALDGYPVCIFAYGQTGSGKTFTMEGGPGGDPQLEGLIPRALRHLFSVAQELSGQGWTYSFVASYVEIYNETVRDLLATGTRKGQGGECEIRRAGPGSEELTVTNARYVPVSCEKEVDALLHLARQNRAVARTAQNERSSRSHSVFQLQISGEHSSRGLQCGAPLSLVDLAGSERLDPGLALGPGERERLRETQAINSSLSTLGLVIMALSNKESHVPYRNSKLTYLLQNSLGGSAKMLMFVNISPLEENVSESLNSLRFASKVNQCVIGTAQANRK</sequence>
<keyword id="KW-0002">3D-structure</keyword>
<keyword id="KW-0067">ATP-binding</keyword>
<keyword id="KW-0131">Cell cycle</keyword>
<keyword id="KW-0132">Cell division</keyword>
<keyword id="KW-0175">Coiled coil</keyword>
<keyword id="KW-0963">Cytoplasm</keyword>
<keyword id="KW-0206">Cytoskeleton</keyword>
<keyword id="KW-0967">Endosome</keyword>
<keyword id="KW-0493">Microtubule</keyword>
<keyword id="KW-0498">Mitosis</keyword>
<keyword id="KW-0505">Motor protein</keyword>
<keyword id="KW-0547">Nucleotide-binding</keyword>
<keyword id="KW-0539">Nucleus</keyword>
<keyword id="KW-0597">Phosphoprotein</keyword>
<keyword id="KW-1267">Proteomics identification</keyword>
<keyword id="KW-1185">Reference proteome</keyword>
<accession>Q9BW19</accession>
<accession>O60887</accession>
<accession>Q14834</accession>
<accession>Q4KMP0</accession>
<accession>Q5SU09</accession>
<accession>Q6GMS7</accession>
<accession>Q6P4A5</accession>
<accession>Q9UQP7</accession>
<organism>
    <name type="scientific">Homo sapiens</name>
    <name type="common">Human</name>
    <dbReference type="NCBI Taxonomy" id="9606"/>
    <lineage>
        <taxon>Eukaryota</taxon>
        <taxon>Metazoa</taxon>
        <taxon>Chordata</taxon>
        <taxon>Craniata</taxon>
        <taxon>Vertebrata</taxon>
        <taxon>Euteleostomi</taxon>
        <taxon>Mammalia</taxon>
        <taxon>Eutheria</taxon>
        <taxon>Euarchontoglires</taxon>
        <taxon>Primates</taxon>
        <taxon>Haplorrhini</taxon>
        <taxon>Catarrhini</taxon>
        <taxon>Hominidae</taxon>
        <taxon>Homo</taxon>
    </lineage>
</organism>
<evidence type="ECO:0000250" key="1"/>
<evidence type="ECO:0000250" key="2">
    <source>
        <dbReference type="UniProtKB" id="Q9QWT9"/>
    </source>
</evidence>
<evidence type="ECO:0000255" key="3"/>
<evidence type="ECO:0000255" key="4">
    <source>
        <dbReference type="PROSITE-ProRule" id="PRU00283"/>
    </source>
</evidence>
<evidence type="ECO:0000256" key="5">
    <source>
        <dbReference type="SAM" id="MobiDB-lite"/>
    </source>
</evidence>
<evidence type="ECO:0000269" key="6">
    <source>
    </source>
</evidence>
<evidence type="ECO:0000269" key="7">
    <source>
    </source>
</evidence>
<evidence type="ECO:0000305" key="8"/>
<evidence type="ECO:0007744" key="9">
    <source>
    </source>
</evidence>
<evidence type="ECO:0007744" key="10">
    <source>
    </source>
</evidence>
<evidence type="ECO:0007829" key="11">
    <source>
        <dbReference type="PDB" id="5WDH"/>
    </source>
</evidence>
<gene>
    <name type="primary">KIFC1</name>
    <name type="synonym">HSET</name>
    <name type="synonym">KNSL2</name>
</gene>